<organism>
    <name type="scientific">Bos taurus</name>
    <name type="common">Bovine</name>
    <dbReference type="NCBI Taxonomy" id="9913"/>
    <lineage>
        <taxon>Eukaryota</taxon>
        <taxon>Metazoa</taxon>
        <taxon>Chordata</taxon>
        <taxon>Craniata</taxon>
        <taxon>Vertebrata</taxon>
        <taxon>Euteleostomi</taxon>
        <taxon>Mammalia</taxon>
        <taxon>Eutheria</taxon>
        <taxon>Laurasiatheria</taxon>
        <taxon>Artiodactyla</taxon>
        <taxon>Ruminantia</taxon>
        <taxon>Pecora</taxon>
        <taxon>Bovidae</taxon>
        <taxon>Bovinae</taxon>
        <taxon>Bos</taxon>
    </lineage>
</organism>
<comment type="function">
    <text evidence="3">Catalytic subunit of the tRNA-splicing ligase complex that acts by directly joining spliced tRNA halves to mature-sized tRNAs by incorporating the precursor-derived splice junction phosphate into the mature tRNA as a canonical 3',5'-phosphodiester. May act as an RNA ligase with broad substrate specificity, and may function toward other RNAs.</text>
</comment>
<comment type="catalytic activity">
    <reaction evidence="3">
        <text>a 3'-end 3'-phospho-ribonucleotide-RNA + a 5'-end dephospho-ribonucleoside-RNA + GTP = a ribonucleotidyl-ribonucleotide-RNA + GMP + diphosphate</text>
        <dbReference type="Rhea" id="RHEA:68076"/>
        <dbReference type="Rhea" id="RHEA-COMP:10463"/>
        <dbReference type="Rhea" id="RHEA-COMP:13936"/>
        <dbReference type="Rhea" id="RHEA-COMP:17355"/>
        <dbReference type="ChEBI" id="CHEBI:33019"/>
        <dbReference type="ChEBI" id="CHEBI:37565"/>
        <dbReference type="ChEBI" id="CHEBI:58115"/>
        <dbReference type="ChEBI" id="CHEBI:83062"/>
        <dbReference type="ChEBI" id="CHEBI:138284"/>
        <dbReference type="ChEBI" id="CHEBI:173118"/>
        <dbReference type="EC" id="6.5.1.8"/>
    </reaction>
</comment>
<comment type="catalytic activity">
    <reaction evidence="3">
        <text>a 3'-end 2',3'-cyclophospho-ribonucleotide-RNA + a 5'-end dephospho-ribonucleoside-RNA + GTP + H2O = a ribonucleotidyl-ribonucleotide-RNA + GMP + diphosphate + H(+)</text>
        <dbReference type="Rhea" id="RHEA:68080"/>
        <dbReference type="Rhea" id="RHEA-COMP:10464"/>
        <dbReference type="Rhea" id="RHEA-COMP:13936"/>
        <dbReference type="Rhea" id="RHEA-COMP:17355"/>
        <dbReference type="ChEBI" id="CHEBI:15377"/>
        <dbReference type="ChEBI" id="CHEBI:15378"/>
        <dbReference type="ChEBI" id="CHEBI:33019"/>
        <dbReference type="ChEBI" id="CHEBI:37565"/>
        <dbReference type="ChEBI" id="CHEBI:58115"/>
        <dbReference type="ChEBI" id="CHEBI:83064"/>
        <dbReference type="ChEBI" id="CHEBI:138284"/>
        <dbReference type="ChEBI" id="CHEBI:173118"/>
        <dbReference type="EC" id="6.5.1.8"/>
    </reaction>
</comment>
<comment type="cofactor">
    <cofactor evidence="3">
        <name>Mn(2+)</name>
        <dbReference type="ChEBI" id="CHEBI:29035"/>
    </cofactor>
    <text evidence="3">Binds 2 manganese ions per subunit.</text>
</comment>
<comment type="subunit">
    <text evidence="3">Catalytic component of the tRNA-splicing ligase complex.</text>
</comment>
<comment type="subcellular location">
    <subcellularLocation>
        <location evidence="1">Nucleus</location>
    </subcellularLocation>
    <subcellularLocation>
        <location evidence="3">Cytoplasm</location>
    </subcellularLocation>
    <text evidence="1">Enters into the nucleus in case of active transcription while it accumulates in cytosol when transcription level is low.</text>
</comment>
<comment type="miscellaneous">
    <text evidence="3">Ligation probably proceeds through 3 nucleotidyl transfer steps, with 2',3'-cyclic phosphate termini being hydrolyzed to 3'-P termini in a step that precedes 3'-P activation with GMP. In the first nucleotidyl transfer step, RTCB reacts with GTP to form a covalent RTCB-histidine-GMP intermediate with release of PPi; in the second step, the GMP moiety is transferred to the RNA 3'-P; in the third step, the 5'-OH from the opposite RNA strand attacks the activated 3'-P to form a 3',5'-phosphodiester bond and release GMP.</text>
</comment>
<comment type="similarity">
    <text evidence="3">Belongs to the RtcB family.</text>
</comment>
<proteinExistence type="evidence at transcript level"/>
<name>RTCB_BOVIN</name>
<sequence length="505" mass="55199">MSRSYNDELQFLEKISKNCWRIKKGFVPNMQVEGVFYVNDSLEKLMFEELRNACRGGGVGGFLPAMKQIGNVAALPGIVHRSIGLPDVHSGYGFAIGNMAAFDMNDPEAVVSPGGVGFDINCGVRLLRTNLDESDVQPVKEQLAQAMFDHIPVGVGSKGVIPMNAKDLEEALEMGVDWSLREGYAWAEDKEHCEEYGRMLQADPNKVSARAKKRGLPQLGTLGAGNHYAEIQVVDEIFNEYAAKKMGIDHKGQVCVMIHSGSRGLGHQVATDALVAMEKAMKRDKIIVNDRQLACARIASPEGQDYLKGMAAAGNYAWVNRSSMTFLTRQAFAKVFNTTPDDLDLHVIYDVSHNIAKVEQHVVDGKERTLLVHRKGSTRAFPPHHPLIAVDYQLTGQPVLIGGTMGTCSYVLTGTEQGMTETFGTTCHGAGRALSRAKSRRNLDFQDVLDKLADMGIAIRVASPKLVMEEAPESYKNVTDVVNTCHDAGISKKAIKLRPIAVIKG</sequence>
<accession>Q5E9T9</accession>
<protein>
    <recommendedName>
        <fullName evidence="3">RNA-splicing ligase RtcB homolog</fullName>
        <ecNumber evidence="3">6.5.1.8</ecNumber>
    </recommendedName>
    <alternativeName>
        <fullName evidence="3">3'-phosphate/5'-hydroxy nucleic acid ligase</fullName>
    </alternativeName>
</protein>
<reference key="1">
    <citation type="journal article" date="2005" name="BMC Genomics">
        <title>Characterization of 954 bovine full-CDS cDNA sequences.</title>
        <authorList>
            <person name="Harhay G.P."/>
            <person name="Sonstegard T.S."/>
            <person name="Keele J.W."/>
            <person name="Heaton M.P."/>
            <person name="Clawson M.L."/>
            <person name="Snelling W.M."/>
            <person name="Wiedmann R.T."/>
            <person name="Van Tassell C.P."/>
            <person name="Smith T.P.L."/>
        </authorList>
    </citation>
    <scope>NUCLEOTIDE SEQUENCE [LARGE SCALE MRNA]</scope>
</reference>
<reference key="2">
    <citation type="submission" date="2005-09" db="EMBL/GenBank/DDBJ databases">
        <authorList>
            <consortium name="NIH - Mammalian Gene Collection (MGC) project"/>
        </authorList>
    </citation>
    <scope>NUCLEOTIDE SEQUENCE [LARGE SCALE MRNA]</scope>
    <source>
        <strain>Hereford</strain>
        <tissue>Uterus</tissue>
    </source>
</reference>
<feature type="chain" id="PRO_0000255240" description="RNA-splicing ligase RtcB homolog">
    <location>
        <begin position="1"/>
        <end position="505"/>
    </location>
</feature>
<feature type="active site" description="GMP-histidine intermediate" evidence="3">
    <location>
        <position position="428"/>
    </location>
</feature>
<feature type="binding site" evidence="3">
    <location>
        <position position="119"/>
    </location>
    <ligand>
        <name>Mn(2+)</name>
        <dbReference type="ChEBI" id="CHEBI:29035"/>
        <label>1</label>
    </ligand>
</feature>
<feature type="binding site" evidence="3">
    <location>
        <position position="122"/>
    </location>
    <ligand>
        <name>Mn(2+)</name>
        <dbReference type="ChEBI" id="CHEBI:29035"/>
        <label>1</label>
    </ligand>
</feature>
<feature type="binding site" evidence="3">
    <location>
        <position position="122"/>
    </location>
    <ligand>
        <name>Mn(2+)</name>
        <dbReference type="ChEBI" id="CHEBI:29035"/>
        <label>2</label>
    </ligand>
</feature>
<feature type="binding site" evidence="3">
    <location>
        <begin position="226"/>
        <end position="230"/>
    </location>
    <ligand>
        <name>GMP</name>
        <dbReference type="ChEBI" id="CHEBI:58115"/>
    </ligand>
</feature>
<feature type="binding site" evidence="3">
    <location>
        <position position="227"/>
    </location>
    <ligand>
        <name>Mn(2+)</name>
        <dbReference type="ChEBI" id="CHEBI:29035"/>
        <label>1</label>
    </ligand>
</feature>
<feature type="binding site" evidence="3">
    <location>
        <position position="259"/>
    </location>
    <ligand>
        <name>Mn(2+)</name>
        <dbReference type="ChEBI" id="CHEBI:29035"/>
        <label>2</label>
    </ligand>
</feature>
<feature type="binding site" evidence="3">
    <location>
        <begin position="353"/>
        <end position="354"/>
    </location>
    <ligand>
        <name>GMP</name>
        <dbReference type="ChEBI" id="CHEBI:58115"/>
    </ligand>
</feature>
<feature type="binding site" evidence="3">
    <location>
        <position position="353"/>
    </location>
    <ligand>
        <name>Mn(2+)</name>
        <dbReference type="ChEBI" id="CHEBI:29035"/>
        <label>2</label>
    </ligand>
</feature>
<feature type="binding site" evidence="3">
    <location>
        <begin position="402"/>
        <end position="405"/>
    </location>
    <ligand>
        <name>GMP</name>
        <dbReference type="ChEBI" id="CHEBI:58115"/>
    </ligand>
</feature>
<feature type="binding site" evidence="3">
    <location>
        <position position="409"/>
    </location>
    <ligand>
        <name>GMP</name>
        <dbReference type="ChEBI" id="CHEBI:58115"/>
    </ligand>
</feature>
<feature type="binding site" evidence="3">
    <location>
        <begin position="428"/>
        <end position="431"/>
    </location>
    <ligand>
        <name>GMP</name>
        <dbReference type="ChEBI" id="CHEBI:58115"/>
    </ligand>
</feature>
<feature type="binding site" evidence="3">
    <location>
        <position position="504"/>
    </location>
    <ligand>
        <name>GMP</name>
        <dbReference type="ChEBI" id="CHEBI:58115"/>
    </ligand>
</feature>
<feature type="modified residue" description="Phosphoserine" evidence="2">
    <location>
        <position position="300"/>
    </location>
</feature>
<feature type="cross-link" description="Glycyl lysine isopeptide (Lys-Gly) (interchain with G-Cter in SUMO2)" evidence="2">
    <location>
        <position position="496"/>
    </location>
</feature>
<dbReference type="EC" id="6.5.1.8" evidence="3"/>
<dbReference type="EMBL" id="BT020831">
    <property type="protein sequence ID" value="AAX08848.1"/>
    <property type="molecule type" value="mRNA"/>
</dbReference>
<dbReference type="EMBL" id="BC104498">
    <property type="protein sequence ID" value="AAI04499.1"/>
    <property type="molecule type" value="mRNA"/>
</dbReference>
<dbReference type="RefSeq" id="NP_001015631.1">
    <property type="nucleotide sequence ID" value="NM_001015631.2"/>
</dbReference>
<dbReference type="SMR" id="Q5E9T9"/>
<dbReference type="FunCoup" id="Q5E9T9">
    <property type="interactions" value="3003"/>
</dbReference>
<dbReference type="STRING" id="9913.ENSBTAP00000014699"/>
<dbReference type="PaxDb" id="9913-ENSBTAP00000014699"/>
<dbReference type="PeptideAtlas" id="Q5E9T9"/>
<dbReference type="Ensembl" id="ENSBTAT00000014699.7">
    <property type="protein sequence ID" value="ENSBTAP00000014699.5"/>
    <property type="gene ID" value="ENSBTAG00000011070.7"/>
</dbReference>
<dbReference type="GeneID" id="525106"/>
<dbReference type="KEGG" id="bta:525106"/>
<dbReference type="CTD" id="51493"/>
<dbReference type="VEuPathDB" id="HostDB:ENSBTAG00000011070"/>
<dbReference type="VGNC" id="VGNC:34194">
    <property type="gene designation" value="RTCB"/>
</dbReference>
<dbReference type="eggNOG" id="KOG3833">
    <property type="taxonomic scope" value="Eukaryota"/>
</dbReference>
<dbReference type="GeneTree" id="ENSGT00940000155911"/>
<dbReference type="HOGENOM" id="CLU_022279_0_0_1"/>
<dbReference type="InParanoid" id="Q5E9T9"/>
<dbReference type="OMA" id="QTRGVEC"/>
<dbReference type="OrthoDB" id="10249697at2759"/>
<dbReference type="TreeFam" id="TF314404"/>
<dbReference type="Proteomes" id="UP000009136">
    <property type="component" value="Chromosome 5"/>
</dbReference>
<dbReference type="Bgee" id="ENSBTAG00000011070">
    <property type="expression patterns" value="Expressed in semen and 110 other cell types or tissues"/>
</dbReference>
<dbReference type="GO" id="GO:0005737">
    <property type="term" value="C:cytoplasm"/>
    <property type="evidence" value="ECO:0000250"/>
    <property type="project" value="UniProtKB"/>
</dbReference>
<dbReference type="GO" id="GO:0005789">
    <property type="term" value="C:endoplasmic reticulum membrane"/>
    <property type="evidence" value="ECO:0007669"/>
    <property type="project" value="Ensembl"/>
</dbReference>
<dbReference type="GO" id="GO:0005635">
    <property type="term" value="C:nuclear envelope"/>
    <property type="evidence" value="ECO:0007669"/>
    <property type="project" value="Ensembl"/>
</dbReference>
<dbReference type="GO" id="GO:0005634">
    <property type="term" value="C:nucleus"/>
    <property type="evidence" value="ECO:0000250"/>
    <property type="project" value="UniProtKB"/>
</dbReference>
<dbReference type="GO" id="GO:0072669">
    <property type="term" value="C:tRNA-splicing ligase complex"/>
    <property type="evidence" value="ECO:0000250"/>
    <property type="project" value="UniProtKB"/>
</dbReference>
<dbReference type="GO" id="GO:0005525">
    <property type="term" value="F:GTP binding"/>
    <property type="evidence" value="ECO:0007669"/>
    <property type="project" value="UniProtKB-KW"/>
</dbReference>
<dbReference type="GO" id="GO:0046872">
    <property type="term" value="F:metal ion binding"/>
    <property type="evidence" value="ECO:0007669"/>
    <property type="project" value="UniProtKB-KW"/>
</dbReference>
<dbReference type="GO" id="GO:0170057">
    <property type="term" value="F:RNA ligase (GTP) activity"/>
    <property type="evidence" value="ECO:0000250"/>
    <property type="project" value="UniProtKB"/>
</dbReference>
<dbReference type="GO" id="GO:0001701">
    <property type="term" value="P:in utero embryonic development"/>
    <property type="evidence" value="ECO:0007669"/>
    <property type="project" value="Ensembl"/>
</dbReference>
<dbReference type="GO" id="GO:0001890">
    <property type="term" value="P:placenta development"/>
    <property type="evidence" value="ECO:0007669"/>
    <property type="project" value="Ensembl"/>
</dbReference>
<dbReference type="GO" id="GO:0006388">
    <property type="term" value="P:tRNA splicing, via endonucleolytic cleavage and ligation"/>
    <property type="evidence" value="ECO:0000250"/>
    <property type="project" value="UniProtKB"/>
</dbReference>
<dbReference type="FunFam" id="3.90.1860.10:FF:000001">
    <property type="entry name" value="tRNA-splicing ligase RtcB homolog"/>
    <property type="match status" value="1"/>
</dbReference>
<dbReference type="Gene3D" id="3.90.1860.10">
    <property type="entry name" value="tRNA-splicing ligase RtcB"/>
    <property type="match status" value="1"/>
</dbReference>
<dbReference type="HAMAP" id="MF_03144">
    <property type="entry name" value="RtcB_euk"/>
    <property type="match status" value="1"/>
</dbReference>
<dbReference type="InterPro" id="IPR001233">
    <property type="entry name" value="RtcB"/>
</dbReference>
<dbReference type="InterPro" id="IPR036025">
    <property type="entry name" value="RtcB-like_sf"/>
</dbReference>
<dbReference type="InterPro" id="IPR027513">
    <property type="entry name" value="RtcB_euk"/>
</dbReference>
<dbReference type="PANTHER" id="PTHR11118">
    <property type="entry name" value="RNA-SPLICING LIGASE RTCB HOMOLOG"/>
    <property type="match status" value="1"/>
</dbReference>
<dbReference type="PANTHER" id="PTHR11118:SF1">
    <property type="entry name" value="RNA-SPLICING LIGASE RTCB HOMOLOG"/>
    <property type="match status" value="1"/>
</dbReference>
<dbReference type="Pfam" id="PF01139">
    <property type="entry name" value="RtcB"/>
    <property type="match status" value="1"/>
</dbReference>
<dbReference type="SUPFAM" id="SSF103365">
    <property type="entry name" value="Hypothetical protein PH1602"/>
    <property type="match status" value="1"/>
</dbReference>
<dbReference type="PROSITE" id="PS01288">
    <property type="entry name" value="UPF0027"/>
    <property type="match status" value="1"/>
</dbReference>
<evidence type="ECO:0000250" key="1"/>
<evidence type="ECO:0000250" key="2">
    <source>
        <dbReference type="UniProtKB" id="Q9Y3I0"/>
    </source>
</evidence>
<evidence type="ECO:0000255" key="3">
    <source>
        <dbReference type="HAMAP-Rule" id="MF_03144"/>
    </source>
</evidence>
<keyword id="KW-0963">Cytoplasm</keyword>
<keyword id="KW-0342">GTP-binding</keyword>
<keyword id="KW-1017">Isopeptide bond</keyword>
<keyword id="KW-0436">Ligase</keyword>
<keyword id="KW-0464">Manganese</keyword>
<keyword id="KW-0479">Metal-binding</keyword>
<keyword id="KW-0547">Nucleotide-binding</keyword>
<keyword id="KW-0539">Nucleus</keyword>
<keyword id="KW-0597">Phosphoprotein</keyword>
<keyword id="KW-1185">Reference proteome</keyword>
<keyword id="KW-0819">tRNA processing</keyword>
<keyword id="KW-0832">Ubl conjugation</keyword>
<gene>
    <name evidence="3" type="primary">RTCB</name>
</gene>